<reference key="1">
    <citation type="journal article" date="2008" name="Genomics">
        <title>Evolution in the laboratory: the genome of Halobacterium salinarum strain R1 compared to that of strain NRC-1.</title>
        <authorList>
            <person name="Pfeiffer F."/>
            <person name="Schuster S.C."/>
            <person name="Broicher A."/>
            <person name="Falb M."/>
            <person name="Palm P."/>
            <person name="Rodewald K."/>
            <person name="Ruepp A."/>
            <person name="Soppa J."/>
            <person name="Tittor J."/>
            <person name="Oesterhelt D."/>
        </authorList>
    </citation>
    <scope>NUCLEOTIDE SEQUENCE [LARGE SCALE GENOMIC DNA]</scope>
    <source>
        <strain>ATCC 29341 / DSM 671 / R1</strain>
    </source>
</reference>
<dbReference type="EC" id="6.3.5.-" evidence="1"/>
<dbReference type="EMBL" id="AM774415">
    <property type="protein sequence ID" value="CAP14343.1"/>
    <property type="molecule type" value="Genomic_DNA"/>
</dbReference>
<dbReference type="RefSeq" id="WP_010903349.1">
    <property type="nucleotide sequence ID" value="NC_010364.1"/>
</dbReference>
<dbReference type="SMR" id="B0R6H4"/>
<dbReference type="EnsemblBacteria" id="CAP14343">
    <property type="protein sequence ID" value="CAP14343"/>
    <property type="gene ID" value="OE_3591F"/>
</dbReference>
<dbReference type="GeneID" id="68694470"/>
<dbReference type="KEGG" id="hsl:OE_3591F"/>
<dbReference type="HOGENOM" id="CLU_019134_2_1_2"/>
<dbReference type="PhylomeDB" id="B0R6H4"/>
<dbReference type="Proteomes" id="UP000001321">
    <property type="component" value="Chromosome"/>
</dbReference>
<dbReference type="GO" id="GO:0004067">
    <property type="term" value="F:asparaginase activity"/>
    <property type="evidence" value="ECO:0007669"/>
    <property type="project" value="InterPro"/>
</dbReference>
<dbReference type="GO" id="GO:0005524">
    <property type="term" value="F:ATP binding"/>
    <property type="evidence" value="ECO:0007669"/>
    <property type="project" value="UniProtKB-KW"/>
</dbReference>
<dbReference type="GO" id="GO:0050567">
    <property type="term" value="F:glutaminyl-tRNA synthase (glutamine-hydrolyzing) activity"/>
    <property type="evidence" value="ECO:0007669"/>
    <property type="project" value="UniProtKB-UniRule"/>
</dbReference>
<dbReference type="GO" id="GO:0006520">
    <property type="term" value="P:amino acid metabolic process"/>
    <property type="evidence" value="ECO:0007669"/>
    <property type="project" value="InterPro"/>
</dbReference>
<dbReference type="GO" id="GO:0006450">
    <property type="term" value="P:regulation of translational fidelity"/>
    <property type="evidence" value="ECO:0007669"/>
    <property type="project" value="InterPro"/>
</dbReference>
<dbReference type="GO" id="GO:0006412">
    <property type="term" value="P:translation"/>
    <property type="evidence" value="ECO:0007669"/>
    <property type="project" value="UniProtKB-UniRule"/>
</dbReference>
<dbReference type="CDD" id="cd08962">
    <property type="entry name" value="GatD"/>
    <property type="match status" value="1"/>
</dbReference>
<dbReference type="Gene3D" id="2.30.30.520">
    <property type="match status" value="1"/>
</dbReference>
<dbReference type="Gene3D" id="3.40.50.40">
    <property type="match status" value="1"/>
</dbReference>
<dbReference type="Gene3D" id="3.40.50.1170">
    <property type="entry name" value="L-asparaginase, N-terminal domain"/>
    <property type="match status" value="1"/>
</dbReference>
<dbReference type="HAMAP" id="MF_00586">
    <property type="entry name" value="GatD"/>
    <property type="match status" value="1"/>
</dbReference>
<dbReference type="InterPro" id="IPR006033">
    <property type="entry name" value="AsnA_fam"/>
</dbReference>
<dbReference type="InterPro" id="IPR036152">
    <property type="entry name" value="Asp/glu_Ase-like_sf"/>
</dbReference>
<dbReference type="InterPro" id="IPR006034">
    <property type="entry name" value="Asparaginase/glutaminase-like"/>
</dbReference>
<dbReference type="InterPro" id="IPR020827">
    <property type="entry name" value="Asparaginase/glutaminase_AS1"/>
</dbReference>
<dbReference type="InterPro" id="IPR027475">
    <property type="entry name" value="Asparaginase/glutaminase_AS2"/>
</dbReference>
<dbReference type="InterPro" id="IPR040919">
    <property type="entry name" value="Asparaginase_C"/>
</dbReference>
<dbReference type="InterPro" id="IPR011878">
    <property type="entry name" value="GatD"/>
</dbReference>
<dbReference type="InterPro" id="IPR040918">
    <property type="entry name" value="GatD_N"/>
</dbReference>
<dbReference type="InterPro" id="IPR037222">
    <property type="entry name" value="GatD_N_sf"/>
</dbReference>
<dbReference type="InterPro" id="IPR027473">
    <property type="entry name" value="L-asparaginase_C"/>
</dbReference>
<dbReference type="InterPro" id="IPR027474">
    <property type="entry name" value="L-asparaginase_N"/>
</dbReference>
<dbReference type="InterPro" id="IPR037152">
    <property type="entry name" value="L-asparaginase_N_sf"/>
</dbReference>
<dbReference type="NCBIfam" id="TIGR00519">
    <property type="entry name" value="asnASE_I"/>
    <property type="match status" value="1"/>
</dbReference>
<dbReference type="NCBIfam" id="TIGR02153">
    <property type="entry name" value="gatD_arch"/>
    <property type="match status" value="1"/>
</dbReference>
<dbReference type="NCBIfam" id="NF003217">
    <property type="entry name" value="PRK04183.1"/>
    <property type="match status" value="1"/>
</dbReference>
<dbReference type="PANTHER" id="PTHR11707:SF28">
    <property type="entry name" value="60 KDA LYSOPHOSPHOLIPASE"/>
    <property type="match status" value="1"/>
</dbReference>
<dbReference type="PANTHER" id="PTHR11707">
    <property type="entry name" value="L-ASPARAGINASE"/>
    <property type="match status" value="1"/>
</dbReference>
<dbReference type="Pfam" id="PF00710">
    <property type="entry name" value="Asparaginase"/>
    <property type="match status" value="1"/>
</dbReference>
<dbReference type="Pfam" id="PF17763">
    <property type="entry name" value="Asparaginase_C"/>
    <property type="match status" value="1"/>
</dbReference>
<dbReference type="Pfam" id="PF18195">
    <property type="entry name" value="GatD_N"/>
    <property type="match status" value="1"/>
</dbReference>
<dbReference type="PIRSF" id="PIRSF500175">
    <property type="entry name" value="Glu_ADT_D"/>
    <property type="match status" value="1"/>
</dbReference>
<dbReference type="PIRSF" id="PIRSF001220">
    <property type="entry name" value="L-ASNase_gatD"/>
    <property type="match status" value="1"/>
</dbReference>
<dbReference type="PRINTS" id="PR00139">
    <property type="entry name" value="ASNGLNASE"/>
</dbReference>
<dbReference type="SFLD" id="SFLDS00057">
    <property type="entry name" value="Glutaminase/Asparaginase"/>
    <property type="match status" value="1"/>
</dbReference>
<dbReference type="SMART" id="SM00870">
    <property type="entry name" value="Asparaginase"/>
    <property type="match status" value="1"/>
</dbReference>
<dbReference type="SUPFAM" id="SSF141300">
    <property type="entry name" value="GatD N-terminal domain-like"/>
    <property type="match status" value="1"/>
</dbReference>
<dbReference type="SUPFAM" id="SSF53774">
    <property type="entry name" value="Glutaminase/Asparaginase"/>
    <property type="match status" value="1"/>
</dbReference>
<dbReference type="PROSITE" id="PS00144">
    <property type="entry name" value="ASN_GLN_ASE_1"/>
    <property type="match status" value="1"/>
</dbReference>
<dbReference type="PROSITE" id="PS00917">
    <property type="entry name" value="ASN_GLN_ASE_2"/>
    <property type="match status" value="1"/>
</dbReference>
<dbReference type="PROSITE" id="PS51732">
    <property type="entry name" value="ASN_GLN_ASE_3"/>
    <property type="match status" value="1"/>
</dbReference>
<gene>
    <name evidence="1" type="primary">gatD</name>
    <name type="ordered locus">OE_3591F</name>
</gene>
<comment type="function">
    <text evidence="1">Allows the formation of correctly charged Gln-tRNA(Gln) through the transamidation of misacylated Glu-tRNA(Gln) in organisms which lack glutaminyl-tRNA synthetase. The reaction takes place in the presence of glutamine and ATP through an activated gamma-phospho-Glu-tRNA(Gln). The GatDE system is specific for glutamate and does not act on aspartate.</text>
</comment>
<comment type="catalytic activity">
    <reaction evidence="1">
        <text>L-glutamyl-tRNA(Gln) + L-glutamine + ATP + H2O = L-glutaminyl-tRNA(Gln) + L-glutamate + ADP + phosphate + H(+)</text>
        <dbReference type="Rhea" id="RHEA:17521"/>
        <dbReference type="Rhea" id="RHEA-COMP:9681"/>
        <dbReference type="Rhea" id="RHEA-COMP:9684"/>
        <dbReference type="ChEBI" id="CHEBI:15377"/>
        <dbReference type="ChEBI" id="CHEBI:15378"/>
        <dbReference type="ChEBI" id="CHEBI:29985"/>
        <dbReference type="ChEBI" id="CHEBI:30616"/>
        <dbReference type="ChEBI" id="CHEBI:43474"/>
        <dbReference type="ChEBI" id="CHEBI:58359"/>
        <dbReference type="ChEBI" id="CHEBI:78520"/>
        <dbReference type="ChEBI" id="CHEBI:78521"/>
        <dbReference type="ChEBI" id="CHEBI:456216"/>
    </reaction>
</comment>
<comment type="subunit">
    <text evidence="1">Heterodimer of GatD and GatE.</text>
</comment>
<comment type="similarity">
    <text evidence="1">Belongs to the asparaginase 1 family. GatD subfamily.</text>
</comment>
<keyword id="KW-0067">ATP-binding</keyword>
<keyword id="KW-0436">Ligase</keyword>
<keyword id="KW-0547">Nucleotide-binding</keyword>
<keyword id="KW-0648">Protein biosynthesis</keyword>
<organism>
    <name type="scientific">Halobacterium salinarum (strain ATCC 29341 / DSM 671 / R1)</name>
    <dbReference type="NCBI Taxonomy" id="478009"/>
    <lineage>
        <taxon>Archaea</taxon>
        <taxon>Methanobacteriati</taxon>
        <taxon>Methanobacteriota</taxon>
        <taxon>Stenosarchaea group</taxon>
        <taxon>Halobacteria</taxon>
        <taxon>Halobacteriales</taxon>
        <taxon>Halobacteriaceae</taxon>
        <taxon>Halobacterium</taxon>
        <taxon>Halobacterium salinarum NRC-34001</taxon>
    </lineage>
</organism>
<accession>B0R6H4</accession>
<proteinExistence type="inferred from homology"/>
<name>GATD_HALS3</name>
<evidence type="ECO:0000255" key="1">
    <source>
        <dbReference type="HAMAP-Rule" id="MF_00586"/>
    </source>
</evidence>
<evidence type="ECO:0000255" key="2">
    <source>
        <dbReference type="PROSITE-ProRule" id="PRU01068"/>
    </source>
</evidence>
<evidence type="ECO:0000256" key="3">
    <source>
        <dbReference type="SAM" id="MobiDB-lite"/>
    </source>
</evidence>
<feature type="chain" id="PRO_1000129778" description="Glutamyl-tRNA(Gln) amidotransferase subunit D">
    <location>
        <begin position="1"/>
        <end position="427"/>
    </location>
</feature>
<feature type="domain" description="Asparaginase/glutaminase" evidence="2">
    <location>
        <begin position="80"/>
        <end position="413"/>
    </location>
</feature>
<feature type="region of interest" description="Disordered" evidence="3">
    <location>
        <begin position="1"/>
        <end position="20"/>
    </location>
</feature>
<feature type="compositionally biased region" description="Basic and acidic residues" evidence="3">
    <location>
        <begin position="1"/>
        <end position="18"/>
    </location>
</feature>
<feature type="active site" evidence="1">
    <location>
        <position position="90"/>
    </location>
</feature>
<feature type="active site" evidence="1">
    <location>
        <position position="166"/>
    </location>
</feature>
<feature type="active site" evidence="1">
    <location>
        <position position="167"/>
    </location>
</feature>
<feature type="active site" evidence="1">
    <location>
        <position position="243"/>
    </location>
</feature>
<protein>
    <recommendedName>
        <fullName evidence="1">Glutamyl-tRNA(Gln) amidotransferase subunit D</fullName>
        <shortName evidence="1">Glu-ADT subunit D</shortName>
        <ecNumber evidence="1">6.3.5.-</ecNumber>
    </recommendedName>
</protein>
<sequence>MTADPGDRVRVTHGDASHEGVLVPSPSDDHLVVKLDSGYNVGVDTADADIDVLDADAVTVDGDTGEDAAGSTVEFDDDLPTIALISTGGTIASTVDYRTGAVTAQFDAEDVLRAVPDLAGRANYRGRVVANILSENMEPSIWQDLAAAVREEIEAGADGVVVMHGTDTMQFSASALSFMLETPVPVVFTGSQRSADRPSSDNVMNAVCAVEAAKSDVAEVMVCMHATESDDRCALHRGTRVRKTHTSRRDAFETVGATPLGYVDYDAASEAATADARGVTVEGAHAARGDATLDVASALEPAVELVKFTPGMNESLLAACEGSAGVVIEGTGLGHVHSDLTDTIGSLVDDGTTVVMTSQCLEGRVCDRVYDTGRDLLAAGVVEAGDTLPGTAKVKLMWALANADDPEAAMQESVAGALTTQSRPWTA</sequence>